<name>YBDF_ECO57</name>
<dbReference type="EMBL" id="AE005174">
    <property type="protein sequence ID" value="AAG54912.1"/>
    <property type="molecule type" value="Genomic_DNA"/>
</dbReference>
<dbReference type="EMBL" id="BA000007">
    <property type="protein sequence ID" value="BAB34040.1"/>
    <property type="molecule type" value="Genomic_DNA"/>
</dbReference>
<dbReference type="PIR" id="A90706">
    <property type="entry name" value="A90706"/>
</dbReference>
<dbReference type="PIR" id="D85556">
    <property type="entry name" value="D85556"/>
</dbReference>
<dbReference type="RefSeq" id="NP_308644.1">
    <property type="nucleotide sequence ID" value="NC_002695.1"/>
</dbReference>
<dbReference type="RefSeq" id="WP_000360951.1">
    <property type="nucleotide sequence ID" value="NZ_VOAI01000012.1"/>
</dbReference>
<dbReference type="SMR" id="P0AAT3"/>
<dbReference type="STRING" id="155864.Z0718"/>
<dbReference type="GeneID" id="916976"/>
<dbReference type="KEGG" id="ece:Z0718"/>
<dbReference type="KEGG" id="ecs:ECs_0617"/>
<dbReference type="PATRIC" id="fig|386585.9.peg.725"/>
<dbReference type="eggNOG" id="COG2315">
    <property type="taxonomic scope" value="Bacteria"/>
</dbReference>
<dbReference type="HOGENOM" id="CLU_105851_1_0_6"/>
<dbReference type="OMA" id="GYHMNKR"/>
<dbReference type="Proteomes" id="UP000000558">
    <property type="component" value="Chromosome"/>
</dbReference>
<dbReference type="Proteomes" id="UP000002519">
    <property type="component" value="Chromosome"/>
</dbReference>
<dbReference type="Gene3D" id="3.90.1150.30">
    <property type="match status" value="1"/>
</dbReference>
<dbReference type="InterPro" id="IPR007351">
    <property type="entry name" value="YjbR"/>
</dbReference>
<dbReference type="InterPro" id="IPR038056">
    <property type="entry name" value="YjbR-like_sf"/>
</dbReference>
<dbReference type="NCBIfam" id="NF007603">
    <property type="entry name" value="PRK10250.1"/>
    <property type="match status" value="1"/>
</dbReference>
<dbReference type="PANTHER" id="PTHR35145:SF1">
    <property type="entry name" value="CYTOPLASMIC PROTEIN"/>
    <property type="match status" value="1"/>
</dbReference>
<dbReference type="PANTHER" id="PTHR35145">
    <property type="entry name" value="CYTOPLASMIC PROTEIN-RELATED"/>
    <property type="match status" value="1"/>
</dbReference>
<dbReference type="Pfam" id="PF04237">
    <property type="entry name" value="YjbR"/>
    <property type="match status" value="1"/>
</dbReference>
<dbReference type="SUPFAM" id="SSF142906">
    <property type="entry name" value="YjbR-like"/>
    <property type="match status" value="1"/>
</dbReference>
<organism>
    <name type="scientific">Escherichia coli O157:H7</name>
    <dbReference type="NCBI Taxonomy" id="83334"/>
    <lineage>
        <taxon>Bacteria</taxon>
        <taxon>Pseudomonadati</taxon>
        <taxon>Pseudomonadota</taxon>
        <taxon>Gammaproteobacteria</taxon>
        <taxon>Enterobacterales</taxon>
        <taxon>Enterobacteriaceae</taxon>
        <taxon>Escherichia</taxon>
    </lineage>
</organism>
<sequence length="122" mass="14050">MDKQSLHETAKRLALELPFVELCWPFGPEFDVFKIGGKIFMLSSELRGVPFINLKSDPQKSLLNQQIYPSIKPGYHMNKKHWISVYPGEEISEALLRDLINDSWNLVVDGLAKRDQKRVRPG</sequence>
<accession>P0AAT3</accession>
<accession>P39454</accession>
<accession>P77200</accession>
<accession>Q9R7T8</accession>
<keyword id="KW-1185">Reference proteome</keyword>
<gene>
    <name type="primary">ybdF</name>
    <name type="ordered locus">Z0718</name>
    <name type="ordered locus">ECs0617</name>
</gene>
<proteinExistence type="predicted"/>
<protein>
    <recommendedName>
        <fullName>Uncharacterized protein YbdF</fullName>
    </recommendedName>
</protein>
<reference key="1">
    <citation type="journal article" date="2001" name="Nature">
        <title>Genome sequence of enterohaemorrhagic Escherichia coli O157:H7.</title>
        <authorList>
            <person name="Perna N.T."/>
            <person name="Plunkett G. III"/>
            <person name="Burland V."/>
            <person name="Mau B."/>
            <person name="Glasner J.D."/>
            <person name="Rose D.J."/>
            <person name="Mayhew G.F."/>
            <person name="Evans P.S."/>
            <person name="Gregor J."/>
            <person name="Kirkpatrick H.A."/>
            <person name="Posfai G."/>
            <person name="Hackett J."/>
            <person name="Klink S."/>
            <person name="Boutin A."/>
            <person name="Shao Y."/>
            <person name="Miller L."/>
            <person name="Grotbeck E.J."/>
            <person name="Davis N.W."/>
            <person name="Lim A."/>
            <person name="Dimalanta E.T."/>
            <person name="Potamousis K."/>
            <person name="Apodaca J."/>
            <person name="Anantharaman T.S."/>
            <person name="Lin J."/>
            <person name="Yen G."/>
            <person name="Schwartz D.C."/>
            <person name="Welch R.A."/>
            <person name="Blattner F.R."/>
        </authorList>
    </citation>
    <scope>NUCLEOTIDE SEQUENCE [LARGE SCALE GENOMIC DNA]</scope>
    <source>
        <strain>O157:H7 / EDL933 / ATCC 700927 / EHEC</strain>
    </source>
</reference>
<reference key="2">
    <citation type="journal article" date="2001" name="DNA Res.">
        <title>Complete genome sequence of enterohemorrhagic Escherichia coli O157:H7 and genomic comparison with a laboratory strain K-12.</title>
        <authorList>
            <person name="Hayashi T."/>
            <person name="Makino K."/>
            <person name="Ohnishi M."/>
            <person name="Kurokawa K."/>
            <person name="Ishii K."/>
            <person name="Yokoyama K."/>
            <person name="Han C.-G."/>
            <person name="Ohtsubo E."/>
            <person name="Nakayama K."/>
            <person name="Murata T."/>
            <person name="Tanaka M."/>
            <person name="Tobe T."/>
            <person name="Iida T."/>
            <person name="Takami H."/>
            <person name="Honda T."/>
            <person name="Sasakawa C."/>
            <person name="Ogasawara N."/>
            <person name="Yasunaga T."/>
            <person name="Kuhara S."/>
            <person name="Shiba T."/>
            <person name="Hattori M."/>
            <person name="Shinagawa H."/>
        </authorList>
    </citation>
    <scope>NUCLEOTIDE SEQUENCE [LARGE SCALE GENOMIC DNA]</scope>
    <source>
        <strain>O157:H7 / Sakai / RIMD 0509952 / EHEC</strain>
    </source>
</reference>
<feature type="chain" id="PRO_0000168666" description="Uncharacterized protein YbdF">
    <location>
        <begin position="1"/>
        <end position="122"/>
    </location>
</feature>